<feature type="signal peptide" evidence="2">
    <location>
        <begin position="1"/>
        <end position="17"/>
    </location>
</feature>
<feature type="chain" id="PRO_0000457201" description="Early protein OPG038" evidence="2">
    <location>
        <begin position="18"/>
        <end position="220"/>
    </location>
</feature>
<feature type="glycosylation site" description="N-linked (GlcNAc...) asparagine; by host" evidence="3">
    <location>
        <position position="49"/>
    </location>
</feature>
<feature type="glycosylation site" description="N-linked (GlcNAc...) asparagine; by host" evidence="3">
    <location>
        <position position="79"/>
    </location>
</feature>
<feature type="glycosylation site" description="N-linked (GlcNAc...) asparagine; by host" evidence="3">
    <location>
        <position position="118"/>
    </location>
</feature>
<feature type="glycosylation site" description="N-linked (GlcNAc...) asparagine; by host" evidence="3">
    <location>
        <position position="154"/>
    </location>
</feature>
<feature type="strand" evidence="7">
    <location>
        <begin position="33"/>
        <end position="46"/>
    </location>
</feature>
<feature type="strand" evidence="7">
    <location>
        <begin position="57"/>
        <end position="63"/>
    </location>
</feature>
<feature type="strand" evidence="7">
    <location>
        <begin position="66"/>
        <end position="73"/>
    </location>
</feature>
<feature type="strand" evidence="7">
    <location>
        <begin position="76"/>
        <end position="84"/>
    </location>
</feature>
<feature type="strand" evidence="7">
    <location>
        <begin position="89"/>
        <end position="97"/>
    </location>
</feature>
<feature type="turn" evidence="7">
    <location>
        <begin position="98"/>
        <end position="100"/>
    </location>
</feature>
<feature type="strand" evidence="7">
    <location>
        <begin position="101"/>
        <end position="109"/>
    </location>
</feature>
<feature type="strand" evidence="7">
    <location>
        <begin position="119"/>
        <end position="125"/>
    </location>
</feature>
<feature type="strand" evidence="7">
    <location>
        <begin position="127"/>
        <end position="140"/>
    </location>
</feature>
<feature type="strand" evidence="7">
    <location>
        <begin position="142"/>
        <end position="144"/>
    </location>
</feature>
<feature type="strand" evidence="7">
    <location>
        <begin position="148"/>
        <end position="156"/>
    </location>
</feature>
<feature type="strand" evidence="7">
    <location>
        <begin position="158"/>
        <end position="166"/>
    </location>
</feature>
<feature type="strand" evidence="7">
    <location>
        <begin position="180"/>
        <end position="184"/>
    </location>
</feature>
<feature type="helix" evidence="7">
    <location>
        <begin position="188"/>
        <end position="190"/>
    </location>
</feature>
<feature type="strand" evidence="7">
    <location>
        <begin position="192"/>
        <end position="197"/>
    </location>
</feature>
<feature type="strand" evidence="7">
    <location>
        <begin position="199"/>
        <end position="203"/>
    </location>
</feature>
<feature type="strand" evidence="7">
    <location>
        <begin position="214"/>
        <end position="216"/>
    </location>
</feature>
<accession>A0A7H0DN11</accession>
<dbReference type="EMBL" id="MT903340">
    <property type="protein sequence ID" value="QNP12894.1"/>
    <property type="molecule type" value="Genomic_DNA"/>
</dbReference>
<dbReference type="RefSeq" id="YP_010377021.1">
    <property type="nucleotide sequence ID" value="NC_063383.1"/>
</dbReference>
<dbReference type="PDB" id="8HXA">
    <property type="method" value="EM"/>
    <property type="resolution" value="3.04 A"/>
    <property type="chains" value="A/B/C/D/E/F=18-220"/>
</dbReference>
<dbReference type="PDB" id="8HXB">
    <property type="method" value="EM"/>
    <property type="resolution" value="2.70 A"/>
    <property type="chains" value="A/B/C/D/E/F=18-220"/>
</dbReference>
<dbReference type="PDB" id="8HXC">
    <property type="method" value="EM"/>
    <property type="resolution" value="3.12 A"/>
    <property type="chains" value="A/B/C/D/E/F/G=18-220"/>
</dbReference>
<dbReference type="PDBsum" id="8HXA"/>
<dbReference type="PDBsum" id="8HXB"/>
<dbReference type="PDBsum" id="8HXC"/>
<dbReference type="SMR" id="A0A7H0DN11"/>
<dbReference type="GeneID" id="72551435"/>
<dbReference type="Proteomes" id="UP000516359">
    <property type="component" value="Genome"/>
</dbReference>
<dbReference type="GO" id="GO:0005576">
    <property type="term" value="C:extracellular region"/>
    <property type="evidence" value="ECO:0007669"/>
    <property type="project" value="UniProtKB-SubCell"/>
</dbReference>
<dbReference type="GO" id="GO:0044165">
    <property type="term" value="C:host cell endoplasmic reticulum"/>
    <property type="evidence" value="ECO:0007669"/>
    <property type="project" value="UniProtKB-SubCell"/>
</dbReference>
<dbReference type="GO" id="GO:0085034">
    <property type="term" value="P:symbiont-mediated suppression of host NF-kappaB cascade"/>
    <property type="evidence" value="ECO:0007669"/>
    <property type="project" value="UniProtKB-KW"/>
</dbReference>
<dbReference type="InterPro" id="IPR006971">
    <property type="entry name" value="Poxvirus_M2"/>
</dbReference>
<dbReference type="Pfam" id="PF04887">
    <property type="entry name" value="Pox_M2"/>
    <property type="match status" value="1"/>
</dbReference>
<dbReference type="PIRSF" id="PIRSF015982">
    <property type="entry name" value="VAC_M2L"/>
    <property type="match status" value="1"/>
</dbReference>
<reference key="1">
    <citation type="journal article" date="2022" name="J. Infect. Dis.">
        <title>Exportation of Monkeypox virus from the African continent.</title>
        <authorList>
            <person name="Mauldin M.R."/>
            <person name="McCollum A.M."/>
            <person name="Nakazawa Y.J."/>
            <person name="Mandra A."/>
            <person name="Whitehouse E.R."/>
            <person name="Davidson W."/>
            <person name="Zhao H."/>
            <person name="Gao J."/>
            <person name="Li Y."/>
            <person name="Doty J."/>
            <person name="Yinka-Ogunleye A."/>
            <person name="Akinpelu A."/>
            <person name="Aruna O."/>
            <person name="Naidoo D."/>
            <person name="Lewandowski K."/>
            <person name="Afrough B."/>
            <person name="Graham V."/>
            <person name="Aarons E."/>
            <person name="Hewson R."/>
            <person name="Vipond R."/>
            <person name="Dunning J."/>
            <person name="Chand M."/>
            <person name="Brown C."/>
            <person name="Cohen-Gihon I."/>
            <person name="Erez N."/>
            <person name="Shifman O."/>
            <person name="Israeli O."/>
            <person name="Sharon M."/>
            <person name="Schwartz E."/>
            <person name="Beth-Din A."/>
            <person name="Zvi A."/>
            <person name="Mak T.M."/>
            <person name="Ng Y.K."/>
            <person name="Cui L."/>
            <person name="Lin R.T.P."/>
            <person name="Olson V.A."/>
            <person name="Brooks T."/>
            <person name="Paran N."/>
            <person name="Ihekweazu C."/>
            <person name="Reynolds M.G."/>
        </authorList>
    </citation>
    <scope>NUCLEOTIDE SEQUENCE [LARGE SCALE GENOMIC DNA]</scope>
    <source>
        <strain>MPXV-M5312_HM12_Rivers</strain>
    </source>
</reference>
<comment type="function">
    <text evidence="1">Plays a role in immune evasion. When secreted, inhibits T-cell activation by preventing the binding of host CD80 and CD86 to soluble CTLA4 and CD28. In the infected cell, may inhibits host NF kappa B activation.</text>
</comment>
<comment type="subunit">
    <text evidence="1">Homooligomer. Interacts with host CD80 and CD86 when secreted.</text>
</comment>
<comment type="subcellular location">
    <subcellularLocation>
        <location evidence="1">Host endoplasmic reticulum</location>
    </subcellularLocation>
    <subcellularLocation>
        <location evidence="1">Secreted</location>
    </subcellularLocation>
</comment>
<comment type="induction">
    <text evidence="1">Expressed in the early phase of the viral replicative cycle.</text>
</comment>
<comment type="PTM">
    <text evidence="1">Glycosylated by host.</text>
</comment>
<comment type="similarity">
    <text evidence="4">Belongs to the orthopoxvirus OPG038 family.</text>
</comment>
<gene>
    <name type="primary">OPG038</name>
    <name type="synonym">M2L</name>
    <name type="ORF">MPXVgp026</name>
</gene>
<organismHost>
    <name type="scientific">Cynomys gunnisoni</name>
    <name type="common">Gunnison's prairie dog</name>
    <name type="synonym">Spermophilus gunnisoni</name>
    <dbReference type="NCBI Taxonomy" id="45479"/>
</organismHost>
<organismHost>
    <name type="scientific">Cynomys leucurus</name>
    <name type="common">White-tailed prairie dog</name>
    <dbReference type="NCBI Taxonomy" id="99825"/>
</organismHost>
<organismHost>
    <name type="scientific">Cynomys ludovicianus</name>
    <name type="common">Black-tailed prairie dog</name>
    <dbReference type="NCBI Taxonomy" id="45480"/>
</organismHost>
<organismHost>
    <name type="scientific">Cynomys mexicanus</name>
    <name type="common">Mexican prairie dog</name>
    <dbReference type="NCBI Taxonomy" id="99826"/>
</organismHost>
<organismHost>
    <name type="scientific">Cynomys parvidens</name>
    <name type="common">Utah prairie dog</name>
    <dbReference type="NCBI Taxonomy" id="99827"/>
</organismHost>
<organismHost>
    <name type="scientific">Gliridae</name>
    <name type="common">dormice</name>
    <dbReference type="NCBI Taxonomy" id="30650"/>
</organismHost>
<organismHost>
    <name type="scientific">Heliosciurus ruwenzorii</name>
    <name type="common">Ruwenzori sun squirrel</name>
    <dbReference type="NCBI Taxonomy" id="226685"/>
</organismHost>
<organismHost>
    <name type="scientific">Homo sapiens</name>
    <name type="common">Human</name>
    <dbReference type="NCBI Taxonomy" id="9606"/>
</organismHost>
<organismHost>
    <name type="scientific">Mus musculus</name>
    <name type="common">Mouse</name>
    <dbReference type="NCBI Taxonomy" id="10090"/>
</organismHost>
<evidence type="ECO:0000250" key="1">
    <source>
        <dbReference type="UniProtKB" id="Q80HY2"/>
    </source>
</evidence>
<evidence type="ECO:0000255" key="2"/>
<evidence type="ECO:0000255" key="3">
    <source>
        <dbReference type="PROSITE-ProRule" id="PRU00498"/>
    </source>
</evidence>
<evidence type="ECO:0000305" key="4"/>
<evidence type="ECO:0000312" key="5">
    <source>
        <dbReference type="EMBL" id="QNP12894.1"/>
    </source>
</evidence>
<evidence type="ECO:0000312" key="6">
    <source>
        <dbReference type="Proteomes" id="UP000516359"/>
    </source>
</evidence>
<evidence type="ECO:0007829" key="7">
    <source>
        <dbReference type="PDB" id="8HXB"/>
    </source>
</evidence>
<protein>
    <recommendedName>
        <fullName>Early protein OPG038</fullName>
    </recommendedName>
    <alternativeName>
        <fullName>Protein M2</fullName>
    </alternativeName>
</protein>
<proteinExistence type="evidence at protein level"/>
<keyword id="KW-0002">3D-structure</keyword>
<keyword id="KW-0244">Early protein</keyword>
<keyword id="KW-0325">Glycoprotein</keyword>
<keyword id="KW-1038">Host endoplasmic reticulum</keyword>
<keyword id="KW-0945">Host-virus interaction</keyword>
<keyword id="KW-1100">Inhibition of host NF-kappa-B by virus</keyword>
<keyword id="KW-1185">Reference proteome</keyword>
<keyword id="KW-0964">Secreted</keyword>
<keyword id="KW-0732">Signal</keyword>
<keyword id="KW-0899">Viral immunoevasion</keyword>
<sequence length="220" mass="25189">MVYKLVLLFCIASLGYSVEYKNTICPHRQDYRYWYFVAELTIGVNYDINSTIIGECHMSESYIDRNANIVLTGYGLKVNMTIMDTDQRFVAAAEGVGKDNKLSVLLFTTQRLDKVHHNISVTITCMEMNCGTTKYNSDLPESIHKSSSCDITINGSCVTCVNLETDPTKINPHYLHPKNKYLYHNSEYSMRGSYGVTFIDELNQCLLDIKELSYDICYRE</sequence>
<organism evidence="5 6">
    <name type="scientific">Monkeypox virus</name>
    <dbReference type="NCBI Taxonomy" id="10244"/>
    <lineage>
        <taxon>Viruses</taxon>
        <taxon>Varidnaviria</taxon>
        <taxon>Bamfordvirae</taxon>
        <taxon>Nucleocytoviricota</taxon>
        <taxon>Pokkesviricetes</taxon>
        <taxon>Chitovirales</taxon>
        <taxon>Poxviridae</taxon>
        <taxon>Chordopoxvirinae</taxon>
        <taxon>Orthopoxvirus</taxon>
    </lineage>
</organism>
<name>PG038_MONPV</name>